<accession>P56170</accession>
<proteinExistence type="inferred from homology"/>
<organism>
    <name type="scientific">Brassica juncea</name>
    <name type="common">Indian mustard</name>
    <name type="synonym">Sinapis juncea</name>
    <dbReference type="NCBI Taxonomy" id="3707"/>
    <lineage>
        <taxon>Eukaryota</taxon>
        <taxon>Viridiplantae</taxon>
        <taxon>Streptophyta</taxon>
        <taxon>Embryophyta</taxon>
        <taxon>Tracheophyta</taxon>
        <taxon>Spermatophyta</taxon>
        <taxon>Magnoliopsida</taxon>
        <taxon>eudicotyledons</taxon>
        <taxon>Gunneridae</taxon>
        <taxon>Pentapetalae</taxon>
        <taxon>rosids</taxon>
        <taxon>malvids</taxon>
        <taxon>Brassicales</taxon>
        <taxon>Brassicaceae</taxon>
        <taxon>Brassiceae</taxon>
        <taxon>Brassica</taxon>
    </lineage>
</organism>
<reference key="1">
    <citation type="journal article" date="1998" name="Plant Mol. Biol.">
        <title>cDNA cloning and expression analysis of genes encoding GSH synthesis in roots of the heavy-metal accumulator Brassica juncea L.: evidence for Cd-induction of a putative mitochondrial gamma-glutamylcysteine synthetase isoform.</title>
        <authorList>
            <person name="Schaefer H.J."/>
            <person name="Haag-Kerwer A."/>
            <person name="Rausch T.H."/>
        </authorList>
    </citation>
    <scope>NUCLEOTIDE SEQUENCE [MRNA]</scope>
    <source>
        <strain>cv. Vittasso</strain>
        <tissue>Root</tissue>
    </source>
</reference>
<sequence length="80" mass="8033">MSCCGGNCGCGAGCKCVGCGGCKMYPDLSFSGETTTSEALVLGVAPSMNSQYEASGETFVAENDACKCGSDCKCNPCTCK</sequence>
<comment type="function">
    <text>Metallothioneins have a high content of cysteine residues that bind various heavy metals.</text>
</comment>
<comment type="similarity">
    <text evidence="1">Belongs to the metallothionein superfamily. Type 15 family.</text>
</comment>
<name>MT23_BRAJU</name>
<protein>
    <recommendedName>
        <fullName>Metallothionein-like protein type 2, MT2-22</fullName>
    </recommendedName>
</protein>
<evidence type="ECO:0000305" key="1"/>
<keyword id="KW-0479">Metal-binding</keyword>
<keyword id="KW-0480">Metal-thiolate cluster</keyword>
<feature type="chain" id="PRO_0000197390" description="Metallothionein-like protein type 2, MT2-22">
    <location>
        <begin position="1"/>
        <end position="80"/>
    </location>
</feature>
<dbReference type="EMBL" id="Y10851">
    <property type="protein sequence ID" value="CAA71804.1"/>
    <property type="molecule type" value="mRNA"/>
</dbReference>
<dbReference type="EnsemblPlants" id="mRNA.BjuA03g56970S">
    <property type="protein sequence ID" value="cds.BjuA03g56970S"/>
    <property type="gene ID" value="BjuA03g56970S"/>
</dbReference>
<dbReference type="Gramene" id="mRNA.BjuA03g56970S">
    <property type="protein sequence ID" value="cds.BjuA03g56970S"/>
    <property type="gene ID" value="BjuA03g56970S"/>
</dbReference>
<dbReference type="GO" id="GO:0046872">
    <property type="term" value="F:metal ion binding"/>
    <property type="evidence" value="ECO:0007669"/>
    <property type="project" value="UniProtKB-KW"/>
</dbReference>
<dbReference type="InterPro" id="IPR000347">
    <property type="entry name" value="Metalthion_15p"/>
</dbReference>
<dbReference type="PANTHER" id="PTHR33543:SF30">
    <property type="entry name" value="METALLOTHIONEIN-LIKE PROTEIN"/>
    <property type="match status" value="1"/>
</dbReference>
<dbReference type="PANTHER" id="PTHR33543">
    <property type="entry name" value="METALLOTHIONEIN-LIKE PROTEIN 2A"/>
    <property type="match status" value="1"/>
</dbReference>
<dbReference type="Pfam" id="PF01439">
    <property type="entry name" value="Metallothio_2"/>
    <property type="match status" value="1"/>
</dbReference>